<comment type="function">
    <text evidence="3">Involved in the synthesis of fructan of the inulin neoseries. Catalyzes a self-transfer between identical oligosaccharides of the 1-kestose series.</text>
</comment>
<comment type="catalytic activity">
    <reaction evidence="3">
        <text>[1-beta-D-fructofuranosyl-(2-&gt;1)-]m+1 alpha-D-glucopyranoside + [1-beta-D-fructofuranosyl-(2-&gt;1)-]n+1 alpha-D-glucopyranoside = [1-beta-D-fructofuranosyl-(2-&gt;1)-]m alpha-D-glucopyranoside + [1-beta-D-fructofuranosyl-(2-&gt;1)-]n+1 beta-D-fructofuranosyl-(2-&gt;6)-alpha-D-glucopyranoside (m &gt; 0, n &gt;= 0).</text>
        <dbReference type="EC" id="2.4.1.243"/>
    </reaction>
</comment>
<comment type="catalytic activity">
    <reaction evidence="3">
        <text>[beta-D-fructosyl-(2-&gt;1)-]m + [beta-D-fructosyl-(2-&gt;1)-]n = [beta-D-fructosyl-(2-&gt;1)-]m-1 + [beta-D-fructosyl-(2-&gt;1)-]n+1.</text>
        <dbReference type="EC" id="2.4.1.100"/>
    </reaction>
</comment>
<comment type="biophysicochemical properties">
    <kinetics>
        <KM evidence="3">88 mM for 1-kestose (3a) (for 6G-FFT activity)</KM>
        <KM evidence="3">18 mM for 1-kestose (3a) (for 1-FFT activity)</KM>
        <KM evidence="3">310 mM for nystose (4a) (for 6G-FFT activity)</KM>
        <KM evidence="3">440 mM for nystose (4a) (for 1-FFT activity)</KM>
        <Vmax evidence="3">10.5 mmol/min/mg enzyme toward 1-kestose (3a) for 6G-FFT activity</Vmax>
        <Vmax evidence="3">7.51 mmol/min/mg enzyme toward 1-kestose (3a) for 1-FFT activity</Vmax>
        <Vmax evidence="3">34.9 mmol/min/mg enzyme toward nystose (4a) for 6G-FFT activity</Vmax>
        <Vmax evidence="3">3.66 mmol/min/mg enzyme toward nystose (4a) for 1-FFT activity</Vmax>
    </kinetics>
    <phDependence>
        <text evidence="3">Optimum pH is 5.68 for both catalytic activities. Stable between pH 5.0-6.3.</text>
    </phDependence>
    <temperatureDependence>
        <text evidence="3">Stable up to 40 degrees Celsius for both catalytic activities.</text>
    </temperatureDependence>
</comment>
<comment type="subcellular location">
    <subcellularLocation>
        <location evidence="6">Vacuole membrane</location>
        <topology evidence="6">Single-pass type II membrane protein</topology>
    </subcellularLocation>
</comment>
<comment type="induction">
    <text evidence="4">6G-FFT activity is induced by high sucrose under continuous light. Both 6G-fFFT and 1-FFT activities are strongly inhibited by HgCl(2), AgNO(3), p-chloromercuribenzoate and SDS, partially inhibited by CaCl(2), MgCl(2), MnCl(2), FeCl(2), CoCl(2), ZnCl(2), SnCl(2), CuSO(4) and EDTA, and activated by sodium deoxycholate, triton X-100 and tween-80.</text>
</comment>
<comment type="PTM">
    <text>Might be processed in two N-terminal and C-terminal proteolytic fragments.</text>
</comment>
<comment type="similarity">
    <text evidence="5">Belongs to the glycosyl hydrolase 32 family.</text>
</comment>
<organism>
    <name type="scientific">Allium cepa</name>
    <name type="common">Onion</name>
    <dbReference type="NCBI Taxonomy" id="4679"/>
    <lineage>
        <taxon>Eukaryota</taxon>
        <taxon>Viridiplantae</taxon>
        <taxon>Streptophyta</taxon>
        <taxon>Embryophyta</taxon>
        <taxon>Tracheophyta</taxon>
        <taxon>Spermatophyta</taxon>
        <taxon>Magnoliopsida</taxon>
        <taxon>Liliopsida</taxon>
        <taxon>Asparagales</taxon>
        <taxon>Amaryllidaceae</taxon>
        <taxon>Allioideae</taxon>
        <taxon>Allieae</taxon>
        <taxon>Allium</taxon>
    </lineage>
</organism>
<keyword id="KW-0903">Direct protein sequencing</keyword>
<keyword id="KW-1015">Disulfide bond</keyword>
<keyword id="KW-0325">Glycoprotein</keyword>
<keyword id="KW-0326">Glycosidase</keyword>
<keyword id="KW-0378">Hydrolase</keyword>
<keyword id="KW-0472">Membrane</keyword>
<keyword id="KW-0735">Signal-anchor</keyword>
<keyword id="KW-0808">Transferase</keyword>
<keyword id="KW-0812">Transmembrane</keyword>
<keyword id="KW-1133">Transmembrane helix</keyword>
<keyword id="KW-0926">Vacuole</keyword>
<name>GFT_ALLCE</name>
<dbReference type="EC" id="2.4.1.100" evidence="3"/>
<dbReference type="EC" id="2.4.1.243" evidence="3"/>
<dbReference type="EMBL" id="Y07838">
    <property type="protein sequence ID" value="CAA69170.1"/>
    <property type="molecule type" value="mRNA"/>
</dbReference>
<dbReference type="SMR" id="P92916"/>
<dbReference type="CAZy" id="GH32">
    <property type="family name" value="Glycoside Hydrolase Family 32"/>
</dbReference>
<dbReference type="BRENDA" id="2.4.1.243">
    <property type="organism ID" value="248"/>
</dbReference>
<dbReference type="GO" id="GO:0005774">
    <property type="term" value="C:vacuolar membrane"/>
    <property type="evidence" value="ECO:0007669"/>
    <property type="project" value="UniProtKB-SubCell"/>
</dbReference>
<dbReference type="GO" id="GO:0047207">
    <property type="term" value="F:1,2-beta-fructan 1F-fructosyltransferase activity"/>
    <property type="evidence" value="ECO:0007669"/>
    <property type="project" value="UniProtKB-EC"/>
</dbReference>
<dbReference type="GO" id="GO:0033841">
    <property type="term" value="F:6G-fructosyltransferase activity"/>
    <property type="evidence" value="ECO:0007669"/>
    <property type="project" value="UniProtKB-EC"/>
</dbReference>
<dbReference type="GO" id="GO:0004553">
    <property type="term" value="F:hydrolase activity, hydrolyzing O-glycosyl compounds"/>
    <property type="evidence" value="ECO:0007669"/>
    <property type="project" value="InterPro"/>
</dbReference>
<dbReference type="GO" id="GO:0005975">
    <property type="term" value="P:carbohydrate metabolic process"/>
    <property type="evidence" value="ECO:0007669"/>
    <property type="project" value="InterPro"/>
</dbReference>
<dbReference type="CDD" id="cd18624">
    <property type="entry name" value="GH32_Fruct1-like"/>
    <property type="match status" value="1"/>
</dbReference>
<dbReference type="Gene3D" id="2.60.120.560">
    <property type="entry name" value="Exo-inulinase, domain 1"/>
    <property type="match status" value="1"/>
</dbReference>
<dbReference type="Gene3D" id="2.115.10.20">
    <property type="entry name" value="Glycosyl hydrolase domain, family 43"/>
    <property type="match status" value="1"/>
</dbReference>
<dbReference type="InterPro" id="IPR013320">
    <property type="entry name" value="ConA-like_dom_sf"/>
</dbReference>
<dbReference type="InterPro" id="IPR050551">
    <property type="entry name" value="Fructan_Metab_Enzymes"/>
</dbReference>
<dbReference type="InterPro" id="IPR001362">
    <property type="entry name" value="Glyco_hydro_32"/>
</dbReference>
<dbReference type="InterPro" id="IPR013189">
    <property type="entry name" value="Glyco_hydro_32_C"/>
</dbReference>
<dbReference type="InterPro" id="IPR013148">
    <property type="entry name" value="Glyco_hydro_32_N"/>
</dbReference>
<dbReference type="InterPro" id="IPR023296">
    <property type="entry name" value="Glyco_hydro_beta-prop_sf"/>
</dbReference>
<dbReference type="PANTHER" id="PTHR31953">
    <property type="entry name" value="BETA-FRUCTOFURANOSIDASE, INSOLUBLE ISOENZYME CWINV1-RELATED"/>
    <property type="match status" value="1"/>
</dbReference>
<dbReference type="Pfam" id="PF08244">
    <property type="entry name" value="Glyco_hydro_32C"/>
    <property type="match status" value="1"/>
</dbReference>
<dbReference type="Pfam" id="PF00251">
    <property type="entry name" value="Glyco_hydro_32N"/>
    <property type="match status" value="1"/>
</dbReference>
<dbReference type="SMART" id="SM00640">
    <property type="entry name" value="Glyco_32"/>
    <property type="match status" value="1"/>
</dbReference>
<dbReference type="SUPFAM" id="SSF75005">
    <property type="entry name" value="Arabinanase/levansucrase/invertase"/>
    <property type="match status" value="1"/>
</dbReference>
<dbReference type="SUPFAM" id="SSF49899">
    <property type="entry name" value="Concanavalin A-like lectins/glucanases"/>
    <property type="match status" value="1"/>
</dbReference>
<accession>P92916</accession>
<reference key="1">
    <citation type="journal article" date="1997" name="Plant J.">
        <title>Fructan of the inulin neoseries is synthesized in transgenic chicory plants (Cichorium intybus L.) harbouring onion (Allium cepa L.) fructan:fructan 6G-fructosyltransferase.</title>
        <authorList>
            <person name="Vijn I."/>
            <person name="van Dijken A."/>
            <person name="Sprenger N."/>
            <person name="van Dun K."/>
            <person name="Weisbeek P."/>
            <person name="Wiemken A."/>
            <person name="Smeekens S."/>
        </authorList>
    </citation>
    <scope>NUCLEOTIDE SEQUENCE [MRNA]</scope>
    <scope>SUBCELLULAR LOCATION</scope>
    <scope>INDUCTION</scope>
</reference>
<reference key="2">
    <citation type="journal article" date="2005" name="New Phytol.">
        <title>Purification and characterization of a fructosyltransferase from onion bulbs and its key role in the synthesis of fructo-oligosaccharides in vivo.</title>
        <authorList>
            <person name="Fujishima M."/>
            <person name="Sakai H."/>
            <person name="Ueno K."/>
            <person name="Takahashi N."/>
            <person name="Onodera S."/>
            <person name="Benkeblia N."/>
            <person name="Shiomi N."/>
        </authorList>
    </citation>
    <scope>PROTEIN SEQUENCE OF 56-110 AND 460-518</scope>
    <scope>FUNCTION</scope>
    <scope>CATALYTIC ACTIVITY</scope>
    <scope>BIOPHYSICOCHEMICAL PROPERTIES</scope>
    <scope>INHIBITION</scope>
    <source>
        <strain>cv. Tenshin</strain>
    </source>
</reference>
<proteinExistence type="evidence at protein level"/>
<protein>
    <recommendedName>
        <fullName>Bifunctional 6(G)-fructosyltransferase/2,1-fructan:2,1-fructan 1-fructosyltransferase</fullName>
        <shortName>1-FFT</shortName>
        <shortName>6G-FFT</shortName>
        <shortName>6GFT</shortName>
        <shortName>FFT</shortName>
        <ecNumber evidence="3">2.4.1.100</ecNumber>
        <ecNumber evidence="3">2.4.1.243</ecNumber>
    </recommendedName>
</protein>
<feature type="chain" id="PRO_0000310733" description="Bifunctional 6(G)-fructosyltransferase/2,1-fructan:2,1-fructan 1-fructosyltransferase">
    <location>
        <begin position="1"/>
        <end position="612"/>
    </location>
</feature>
<feature type="topological domain" description="Cytoplasmic" evidence="2">
    <location>
        <begin position="1"/>
        <end position="24"/>
    </location>
</feature>
<feature type="transmembrane region" description="Helical; Signal-anchor for type II membrane protein" evidence="2">
    <location>
        <begin position="25"/>
        <end position="45"/>
    </location>
</feature>
<feature type="topological domain" description="Vacuolar" evidence="2">
    <location>
        <begin position="46"/>
        <end position="612"/>
    </location>
</feature>
<feature type="active site" evidence="1">
    <location>
        <position position="85"/>
    </location>
</feature>
<feature type="binding site" evidence="1">
    <location>
        <begin position="82"/>
        <end position="85"/>
    </location>
    <ligand>
        <name>substrate</name>
    </ligand>
</feature>
<feature type="binding site" evidence="1">
    <location>
        <position position="101"/>
    </location>
    <ligand>
        <name>substrate</name>
    </ligand>
</feature>
<feature type="binding site" evidence="1">
    <location>
        <position position="109"/>
    </location>
    <ligand>
        <name>substrate</name>
    </ligand>
</feature>
<feature type="binding site" evidence="1">
    <location>
        <begin position="144"/>
        <end position="145"/>
    </location>
    <ligand>
        <name>substrate</name>
    </ligand>
</feature>
<feature type="binding site" evidence="1">
    <location>
        <begin position="208"/>
        <end position="209"/>
    </location>
    <ligand>
        <name>substrate</name>
    </ligand>
</feature>
<feature type="binding site" evidence="1">
    <location>
        <position position="267"/>
    </location>
    <ligand>
        <name>substrate</name>
    </ligand>
</feature>
<feature type="glycosylation site" description="N-linked (GlcNAc...) asparagine" evidence="2">
    <location>
        <position position="111"/>
    </location>
</feature>
<feature type="glycosylation site" description="N-linked (GlcNAc...) asparagine" evidence="2">
    <location>
        <position position="216"/>
    </location>
</feature>
<feature type="glycosylation site" description="N-linked (GlcNAc...) asparagine" evidence="2">
    <location>
        <position position="230"/>
    </location>
</feature>
<feature type="glycosylation site" description="N-linked (GlcNAc...) asparagine" evidence="2">
    <location>
        <position position="465"/>
    </location>
</feature>
<feature type="glycosylation site" description="N-linked (GlcNAc...) asparagine" evidence="2">
    <location>
        <position position="586"/>
    </location>
</feature>
<feature type="glycosylation site" description="N-linked (GlcNAc...) asparagine" evidence="2">
    <location>
        <position position="603"/>
    </location>
</feature>
<feature type="disulfide bond" evidence="1">
    <location>
        <begin position="466"/>
        <end position="514"/>
    </location>
</feature>
<feature type="sequence conflict" description="In Ref. 2; AA sequence." evidence="5" ref="2">
    <original>V</original>
    <variation>A</variation>
    <location>
        <position position="56"/>
    </location>
</feature>
<feature type="sequence conflict" description="In Ref. 2; AA sequence." evidence="5" ref="2">
    <original>S</original>
    <variation>T</variation>
    <location>
        <position position="468"/>
    </location>
</feature>
<feature type="sequence conflict" description="In Ref. 2; AA sequence." evidence="5" ref="2">
    <original>I</original>
    <variation>T</variation>
    <location>
        <position position="474"/>
    </location>
</feature>
<feature type="sequence conflict" description="In Ref. 2; AA sequence." evidence="5" ref="2">
    <original>I</original>
    <variation>T</variation>
    <location>
        <position position="505"/>
    </location>
</feature>
<feature type="sequence conflict" description="In Ref. 2; AA sequence." evidence="5" ref="2">
    <original>S</original>
    <variation>A</variation>
    <location>
        <position position="508"/>
    </location>
</feature>
<feature type="sequence conflict" description="In Ref. 2; AA sequence." evidence="5" ref="2">
    <original>I</original>
    <variation>R</variation>
    <location>
        <position position="510"/>
    </location>
</feature>
<sequence>MDAQDIESRHPLIGARPRRRALRSLSILLAAALLLGLVLFYANGTGSGTAVDPVRVDNEFPWTNDMLAWQRCGFHFRTVRNYMNDPSGPMYYKGWYHLFYQHNKDFAYWGNITWGHAVSRDLINWQHLPVAVGPDHWYDISGVWTGSIIVVSEDRVVMLFTGGTKSFDQSINLAEAADPSDPLLLKWIKYDNNPILWPPPGIVRDDFRDPNPIWYNASESTYHIVVGSKNDSLQHTGIALVYLTKDFKKFDLLPTVLHSVDKVGMWECVEVYPVATTGPLLHKAIDNFDVDRVLDRSTVKHVLKASMNDEWHDYYAIGTFDPIGNKWTPDDETVDVGIGLRYDWGKFYASRTFFDPLKQRRIIWGYIGEVDSQKADIAKGWASLQGIPRSVLYDVKTGTNVLTWPIEEMEGLRMARKDFSGIKIKKGSTVELSDFGDAFQIDIEAEFTISKEALEATIEADVGYNCSSSGGAAIRGTLGPFGLLVLANQDLTENTATYFYVSKGIDGSLITHFCQDETRSSKANDIVKRVVGGTVPVLDGETFAVRILVDHSVIESFAMGGRTSATSRAYPTEAINSAARVFLFNNATGVDVIAESVKIWQMNSTYNDFYHF</sequence>
<evidence type="ECO:0000250" key="1"/>
<evidence type="ECO:0000255" key="2"/>
<evidence type="ECO:0000269" key="3">
    <source>
    </source>
</evidence>
<evidence type="ECO:0000269" key="4">
    <source>
    </source>
</evidence>
<evidence type="ECO:0000305" key="5"/>
<evidence type="ECO:0000305" key="6">
    <source>
    </source>
</evidence>